<organism>
    <name type="scientific">Rhodobacter capsulatus (strain ATCC BAA-309 / NBRC 16581 / SB1003)</name>
    <dbReference type="NCBI Taxonomy" id="272942"/>
    <lineage>
        <taxon>Bacteria</taxon>
        <taxon>Pseudomonadati</taxon>
        <taxon>Pseudomonadota</taxon>
        <taxon>Alphaproteobacteria</taxon>
        <taxon>Rhodobacterales</taxon>
        <taxon>Rhodobacter group</taxon>
        <taxon>Rhodobacter</taxon>
    </lineage>
</organism>
<sequence>MKRAWQRMLSGRRLDLLDPTPMDIEIEDIAHGLAFVARWNGQTTGDYAYSVAEHSLLVEELFARANPGIGERWRLAALLHDAPEYVLGDMITPVKAAIGKGYVELDDRLTAAVHLRFGLPAVLPAPIKRAIKAADTVSARLEAEQIAGFSEAEADRIFGKPDPVLVRGLAIRLRPPPEVRAAFTARHHVLLRSLSG</sequence>
<gene>
    <name type="ordered locus">RCAP_rcc00048</name>
</gene>
<feature type="chain" id="PRO_0000066116" description="Uncharacterized protein RCAP_rcc00048">
    <location>
        <begin position="1"/>
        <end position="196"/>
    </location>
</feature>
<feature type="domain" description="HD" evidence="1">
    <location>
        <begin position="51"/>
        <end position="164"/>
    </location>
</feature>
<dbReference type="EMBL" id="L23836">
    <property type="protein sequence ID" value="AAA53541.1"/>
    <property type="molecule type" value="Genomic_DNA"/>
</dbReference>
<dbReference type="EMBL" id="CP001312">
    <property type="protein sequence ID" value="ADE83813.1"/>
    <property type="molecule type" value="Genomic_DNA"/>
</dbReference>
<dbReference type="PIR" id="B36863">
    <property type="entry name" value="B36863"/>
</dbReference>
<dbReference type="RefSeq" id="WP_013065795.1">
    <property type="nucleotide sequence ID" value="NC_014034.1"/>
</dbReference>
<dbReference type="SMR" id="P42506"/>
<dbReference type="STRING" id="272942.RCAP_rcc00048"/>
<dbReference type="GeneID" id="31489005"/>
<dbReference type="KEGG" id="rcp:RCAP_rcc00048"/>
<dbReference type="eggNOG" id="COG1896">
    <property type="taxonomic scope" value="Bacteria"/>
</dbReference>
<dbReference type="HOGENOM" id="CLU_089999_0_0_5"/>
<dbReference type="OrthoDB" id="9794481at2"/>
<dbReference type="Proteomes" id="UP000002361">
    <property type="component" value="Chromosome"/>
</dbReference>
<dbReference type="Gene3D" id="1.10.3210.10">
    <property type="entry name" value="Hypothetical protein af1432"/>
    <property type="match status" value="1"/>
</dbReference>
<dbReference type="InterPro" id="IPR003607">
    <property type="entry name" value="HD/PDEase_dom"/>
</dbReference>
<dbReference type="InterPro" id="IPR006674">
    <property type="entry name" value="HD_domain"/>
</dbReference>
<dbReference type="Pfam" id="PF01966">
    <property type="entry name" value="HD"/>
    <property type="match status" value="1"/>
</dbReference>
<dbReference type="SMART" id="SM00471">
    <property type="entry name" value="HDc"/>
    <property type="match status" value="1"/>
</dbReference>
<dbReference type="SUPFAM" id="SSF109604">
    <property type="entry name" value="HD-domain/PDEase-like"/>
    <property type="match status" value="1"/>
</dbReference>
<dbReference type="PROSITE" id="PS51831">
    <property type="entry name" value="HD"/>
    <property type="match status" value="1"/>
</dbReference>
<name>Y048_RHOCB</name>
<accession>P42506</accession>
<accession>D5AKH1</accession>
<accession>Q53388</accession>
<proteinExistence type="predicted"/>
<evidence type="ECO:0000255" key="1">
    <source>
        <dbReference type="PROSITE-ProRule" id="PRU01175"/>
    </source>
</evidence>
<reference key="1">
    <citation type="journal article" date="1994" name="J. Bacteriol.">
        <title>Nucleotide sequence and characterization of the Rhodobacter capsulatus hvrB gene: HvrB is an activator of S-adenosyl-L-homocysteine hydrolase expression and is a member of the LysR family.</title>
        <authorList>
            <person name="Buggy J.J."/>
            <person name="Sganga M.W."/>
            <person name="Bauer C.E."/>
        </authorList>
    </citation>
    <scope>NUCLEOTIDE SEQUENCE [GENOMIC DNA]</scope>
    <source>
        <strain>ATCC BAA-309 / NBRC 16581 / SB1003</strain>
    </source>
</reference>
<reference key="2">
    <citation type="journal article" date="2010" name="J. Bacteriol.">
        <title>Complete genome sequence of the photosynthetic purple nonsulfur bacterium Rhodobacter capsulatus SB 1003.</title>
        <authorList>
            <person name="Strnad H."/>
            <person name="Lapidus A."/>
            <person name="Paces J."/>
            <person name="Ulbrich P."/>
            <person name="Vlcek C."/>
            <person name="Paces V."/>
            <person name="Haselkorn R."/>
        </authorList>
    </citation>
    <scope>NUCLEOTIDE SEQUENCE [LARGE SCALE GENOMIC DNA]</scope>
    <source>
        <strain>ATCC BAA-309 / NBRC 16581 / SB1003</strain>
    </source>
</reference>
<keyword id="KW-1185">Reference proteome</keyword>
<protein>
    <recommendedName>
        <fullName>Uncharacterized protein RCAP_rcc00048</fullName>
    </recommendedName>
    <alternativeName>
        <fullName>ORF5</fullName>
    </alternativeName>
</protein>